<accession>Q9CHQ8</accession>
<reference key="1">
    <citation type="journal article" date="2001" name="Genome Res.">
        <title>The complete genome sequence of the lactic acid bacterium Lactococcus lactis ssp. lactis IL1403.</title>
        <authorList>
            <person name="Bolotin A."/>
            <person name="Wincker P."/>
            <person name="Mauger S."/>
            <person name="Jaillon O."/>
            <person name="Malarme K."/>
            <person name="Weissenbach J."/>
            <person name="Ehrlich S.D."/>
            <person name="Sorokin A."/>
        </authorList>
    </citation>
    <scope>NUCLEOTIDE SEQUENCE [LARGE SCALE GENOMIC DNA]</scope>
    <source>
        <strain>IL1403</strain>
    </source>
</reference>
<gene>
    <name evidence="1" type="primary">coaE</name>
    <name type="ordered locus">LL0665</name>
    <name type="ORF">L59930</name>
</gene>
<feature type="chain" id="PRO_0000172952" description="Dephospho-CoA kinase">
    <location>
        <begin position="1"/>
        <end position="217"/>
    </location>
</feature>
<feature type="domain" description="DPCK" evidence="1">
    <location>
        <begin position="2"/>
        <end position="217"/>
    </location>
</feature>
<feature type="binding site" evidence="1">
    <location>
        <begin position="10"/>
        <end position="15"/>
    </location>
    <ligand>
        <name>ATP</name>
        <dbReference type="ChEBI" id="CHEBI:30616"/>
    </ligand>
</feature>
<name>COAE_LACLA</name>
<comment type="function">
    <text evidence="1">Catalyzes the phosphorylation of the 3'-hydroxyl group of dephosphocoenzyme A to form coenzyme A.</text>
</comment>
<comment type="catalytic activity">
    <reaction evidence="1">
        <text>3'-dephospho-CoA + ATP = ADP + CoA + H(+)</text>
        <dbReference type="Rhea" id="RHEA:18245"/>
        <dbReference type="ChEBI" id="CHEBI:15378"/>
        <dbReference type="ChEBI" id="CHEBI:30616"/>
        <dbReference type="ChEBI" id="CHEBI:57287"/>
        <dbReference type="ChEBI" id="CHEBI:57328"/>
        <dbReference type="ChEBI" id="CHEBI:456216"/>
        <dbReference type="EC" id="2.7.1.24"/>
    </reaction>
</comment>
<comment type="pathway">
    <text evidence="1">Cofactor biosynthesis; coenzyme A biosynthesis; CoA from (R)-pantothenate: step 5/5.</text>
</comment>
<comment type="subcellular location">
    <subcellularLocation>
        <location evidence="1">Cytoplasm</location>
    </subcellularLocation>
</comment>
<comment type="similarity">
    <text evidence="1 2">Belongs to the CoaE family.</text>
</comment>
<comment type="sequence caution" evidence="2">
    <conflict type="erroneous initiation">
        <sequence resource="EMBL-CDS" id="AAK04763"/>
    </conflict>
</comment>
<sequence length="217" mass="24765">MVIGLTGGIASGKSTVVDFLISEGYQVIDADKVVRQLQEPGGKLYKAIVETYGLDFIADNGQLNREKLGALVFSDSKEREKLSNLQDEIIRTELYDRRDDLLKKMTDKSVSKNFDSKSQGKNLSVNKPIFMDIPLLIEYNYTGFDEIWLVSLPEKIQLERLMARNKFTEEEAKKRISSQMPLSEKQKVADVILDNFGTIEALKKQIQRELARIEEQK</sequence>
<protein>
    <recommendedName>
        <fullName evidence="1">Dephospho-CoA kinase</fullName>
        <ecNumber evidence="1">2.7.1.24</ecNumber>
    </recommendedName>
    <alternativeName>
        <fullName evidence="1">Dephosphocoenzyme A kinase</fullName>
    </alternativeName>
</protein>
<keyword id="KW-0067">ATP-binding</keyword>
<keyword id="KW-0173">Coenzyme A biosynthesis</keyword>
<keyword id="KW-0963">Cytoplasm</keyword>
<keyword id="KW-0418">Kinase</keyword>
<keyword id="KW-0547">Nucleotide-binding</keyword>
<keyword id="KW-1185">Reference proteome</keyword>
<keyword id="KW-0808">Transferase</keyword>
<dbReference type="EC" id="2.7.1.24" evidence="1"/>
<dbReference type="EMBL" id="AE005176">
    <property type="protein sequence ID" value="AAK04763.1"/>
    <property type="status" value="ALT_INIT"/>
    <property type="molecule type" value="Genomic_DNA"/>
</dbReference>
<dbReference type="PIR" id="A86708">
    <property type="entry name" value="A86708"/>
</dbReference>
<dbReference type="RefSeq" id="NP_266821.1">
    <property type="nucleotide sequence ID" value="NC_002662.1"/>
</dbReference>
<dbReference type="SMR" id="Q9CHQ8"/>
<dbReference type="PaxDb" id="272623-L59930"/>
<dbReference type="EnsemblBacteria" id="AAK04763">
    <property type="protein sequence ID" value="AAK04763"/>
    <property type="gene ID" value="L59930"/>
</dbReference>
<dbReference type="KEGG" id="lla:L59930"/>
<dbReference type="PATRIC" id="fig|272623.7.peg.712"/>
<dbReference type="eggNOG" id="COG0237">
    <property type="taxonomic scope" value="Bacteria"/>
</dbReference>
<dbReference type="HOGENOM" id="CLU_057180_0_0_9"/>
<dbReference type="OrthoDB" id="9812943at2"/>
<dbReference type="UniPathway" id="UPA00241">
    <property type="reaction ID" value="UER00356"/>
</dbReference>
<dbReference type="Proteomes" id="UP000002196">
    <property type="component" value="Chromosome"/>
</dbReference>
<dbReference type="GO" id="GO:0005737">
    <property type="term" value="C:cytoplasm"/>
    <property type="evidence" value="ECO:0007669"/>
    <property type="project" value="UniProtKB-SubCell"/>
</dbReference>
<dbReference type="GO" id="GO:0005524">
    <property type="term" value="F:ATP binding"/>
    <property type="evidence" value="ECO:0007669"/>
    <property type="project" value="UniProtKB-UniRule"/>
</dbReference>
<dbReference type="GO" id="GO:0004140">
    <property type="term" value="F:dephospho-CoA kinase activity"/>
    <property type="evidence" value="ECO:0007669"/>
    <property type="project" value="UniProtKB-UniRule"/>
</dbReference>
<dbReference type="GO" id="GO:0015937">
    <property type="term" value="P:coenzyme A biosynthetic process"/>
    <property type="evidence" value="ECO:0007669"/>
    <property type="project" value="UniProtKB-UniRule"/>
</dbReference>
<dbReference type="CDD" id="cd02022">
    <property type="entry name" value="DPCK"/>
    <property type="match status" value="1"/>
</dbReference>
<dbReference type="FunFam" id="3.40.50.300:FF:000991">
    <property type="entry name" value="Dephospho-CoA kinase"/>
    <property type="match status" value="1"/>
</dbReference>
<dbReference type="Gene3D" id="3.40.50.300">
    <property type="entry name" value="P-loop containing nucleotide triphosphate hydrolases"/>
    <property type="match status" value="1"/>
</dbReference>
<dbReference type="HAMAP" id="MF_00376">
    <property type="entry name" value="Dephospho_CoA_kinase"/>
    <property type="match status" value="1"/>
</dbReference>
<dbReference type="InterPro" id="IPR001977">
    <property type="entry name" value="Depp_CoAkinase"/>
</dbReference>
<dbReference type="InterPro" id="IPR027417">
    <property type="entry name" value="P-loop_NTPase"/>
</dbReference>
<dbReference type="NCBIfam" id="TIGR00152">
    <property type="entry name" value="dephospho-CoA kinase"/>
    <property type="match status" value="2"/>
</dbReference>
<dbReference type="PANTHER" id="PTHR10695:SF46">
    <property type="entry name" value="BIFUNCTIONAL COENZYME A SYNTHASE-RELATED"/>
    <property type="match status" value="1"/>
</dbReference>
<dbReference type="PANTHER" id="PTHR10695">
    <property type="entry name" value="DEPHOSPHO-COA KINASE-RELATED"/>
    <property type="match status" value="1"/>
</dbReference>
<dbReference type="Pfam" id="PF01121">
    <property type="entry name" value="CoaE"/>
    <property type="match status" value="2"/>
</dbReference>
<dbReference type="SUPFAM" id="SSF52540">
    <property type="entry name" value="P-loop containing nucleoside triphosphate hydrolases"/>
    <property type="match status" value="1"/>
</dbReference>
<dbReference type="PROSITE" id="PS51219">
    <property type="entry name" value="DPCK"/>
    <property type="match status" value="1"/>
</dbReference>
<proteinExistence type="inferred from homology"/>
<organism>
    <name type="scientific">Lactococcus lactis subsp. lactis (strain IL1403)</name>
    <name type="common">Streptococcus lactis</name>
    <dbReference type="NCBI Taxonomy" id="272623"/>
    <lineage>
        <taxon>Bacteria</taxon>
        <taxon>Bacillati</taxon>
        <taxon>Bacillota</taxon>
        <taxon>Bacilli</taxon>
        <taxon>Lactobacillales</taxon>
        <taxon>Streptococcaceae</taxon>
        <taxon>Lactococcus</taxon>
    </lineage>
</organism>
<evidence type="ECO:0000255" key="1">
    <source>
        <dbReference type="HAMAP-Rule" id="MF_00376"/>
    </source>
</evidence>
<evidence type="ECO:0000305" key="2"/>